<protein>
    <recommendedName>
        <fullName evidence="1">S-adenosylmethionine synthase</fullName>
        <shortName evidence="1">AdoMet synthase</shortName>
        <ecNumber evidence="1">2.5.1.6</ecNumber>
    </recommendedName>
    <alternativeName>
        <fullName evidence="1">MAT</fullName>
    </alternativeName>
    <alternativeName>
        <fullName evidence="1">Methionine adenosyltransferase</fullName>
    </alternativeName>
</protein>
<keyword id="KW-0067">ATP-binding</keyword>
<keyword id="KW-0963">Cytoplasm</keyword>
<keyword id="KW-0460">Magnesium</keyword>
<keyword id="KW-0479">Metal-binding</keyword>
<keyword id="KW-0547">Nucleotide-binding</keyword>
<keyword id="KW-0554">One-carbon metabolism</keyword>
<keyword id="KW-0630">Potassium</keyword>
<keyword id="KW-1185">Reference proteome</keyword>
<keyword id="KW-0808">Transferase</keyword>
<dbReference type="EC" id="2.5.1.6" evidence="1"/>
<dbReference type="EMBL" id="CP000423">
    <property type="protein sequence ID" value="ABJ69678.1"/>
    <property type="molecule type" value="Genomic_DNA"/>
</dbReference>
<dbReference type="RefSeq" id="WP_003564111.1">
    <property type="nucleotide sequence ID" value="NC_008526.1"/>
</dbReference>
<dbReference type="RefSeq" id="YP_806120.1">
    <property type="nucleotide sequence ID" value="NC_008526.1"/>
</dbReference>
<dbReference type="SMR" id="Q03AU4"/>
<dbReference type="STRING" id="321967.LSEI_0877"/>
<dbReference type="PaxDb" id="321967-LSEI_0877"/>
<dbReference type="GeneID" id="57089485"/>
<dbReference type="KEGG" id="lca:LSEI_0877"/>
<dbReference type="PATRIC" id="fig|321967.11.peg.847"/>
<dbReference type="HOGENOM" id="CLU_041802_1_1_9"/>
<dbReference type="UniPathway" id="UPA00315">
    <property type="reaction ID" value="UER00080"/>
</dbReference>
<dbReference type="Proteomes" id="UP000001651">
    <property type="component" value="Chromosome"/>
</dbReference>
<dbReference type="GO" id="GO:0005737">
    <property type="term" value="C:cytoplasm"/>
    <property type="evidence" value="ECO:0007669"/>
    <property type="project" value="UniProtKB-SubCell"/>
</dbReference>
<dbReference type="GO" id="GO:0005524">
    <property type="term" value="F:ATP binding"/>
    <property type="evidence" value="ECO:0007669"/>
    <property type="project" value="UniProtKB-UniRule"/>
</dbReference>
<dbReference type="GO" id="GO:0000287">
    <property type="term" value="F:magnesium ion binding"/>
    <property type="evidence" value="ECO:0007669"/>
    <property type="project" value="UniProtKB-UniRule"/>
</dbReference>
<dbReference type="GO" id="GO:0004478">
    <property type="term" value="F:methionine adenosyltransferase activity"/>
    <property type="evidence" value="ECO:0007669"/>
    <property type="project" value="UniProtKB-UniRule"/>
</dbReference>
<dbReference type="GO" id="GO:0006730">
    <property type="term" value="P:one-carbon metabolic process"/>
    <property type="evidence" value="ECO:0007669"/>
    <property type="project" value="UniProtKB-KW"/>
</dbReference>
<dbReference type="GO" id="GO:0006556">
    <property type="term" value="P:S-adenosylmethionine biosynthetic process"/>
    <property type="evidence" value="ECO:0007669"/>
    <property type="project" value="UniProtKB-UniRule"/>
</dbReference>
<dbReference type="CDD" id="cd18079">
    <property type="entry name" value="S-AdoMet_synt"/>
    <property type="match status" value="1"/>
</dbReference>
<dbReference type="FunFam" id="3.30.300.10:FF:000003">
    <property type="entry name" value="S-adenosylmethionine synthase"/>
    <property type="match status" value="1"/>
</dbReference>
<dbReference type="FunFam" id="3.30.300.10:FF:000004">
    <property type="entry name" value="S-adenosylmethionine synthase"/>
    <property type="match status" value="1"/>
</dbReference>
<dbReference type="Gene3D" id="3.30.300.10">
    <property type="match status" value="3"/>
</dbReference>
<dbReference type="HAMAP" id="MF_00086">
    <property type="entry name" value="S_AdoMet_synth1"/>
    <property type="match status" value="1"/>
</dbReference>
<dbReference type="InterPro" id="IPR022631">
    <property type="entry name" value="ADOMET_SYNTHASE_CS"/>
</dbReference>
<dbReference type="InterPro" id="IPR022630">
    <property type="entry name" value="S-AdoMet_synt_C"/>
</dbReference>
<dbReference type="InterPro" id="IPR022629">
    <property type="entry name" value="S-AdoMet_synt_central"/>
</dbReference>
<dbReference type="InterPro" id="IPR022628">
    <property type="entry name" value="S-AdoMet_synt_N"/>
</dbReference>
<dbReference type="InterPro" id="IPR002133">
    <property type="entry name" value="S-AdoMet_synthetase"/>
</dbReference>
<dbReference type="InterPro" id="IPR022636">
    <property type="entry name" value="S-AdoMet_synthetase_sfam"/>
</dbReference>
<dbReference type="NCBIfam" id="TIGR01034">
    <property type="entry name" value="metK"/>
    <property type="match status" value="1"/>
</dbReference>
<dbReference type="PANTHER" id="PTHR11964">
    <property type="entry name" value="S-ADENOSYLMETHIONINE SYNTHETASE"/>
    <property type="match status" value="1"/>
</dbReference>
<dbReference type="Pfam" id="PF02773">
    <property type="entry name" value="S-AdoMet_synt_C"/>
    <property type="match status" value="1"/>
</dbReference>
<dbReference type="Pfam" id="PF02772">
    <property type="entry name" value="S-AdoMet_synt_M"/>
    <property type="match status" value="1"/>
</dbReference>
<dbReference type="Pfam" id="PF00438">
    <property type="entry name" value="S-AdoMet_synt_N"/>
    <property type="match status" value="1"/>
</dbReference>
<dbReference type="PIRSF" id="PIRSF000497">
    <property type="entry name" value="MAT"/>
    <property type="match status" value="1"/>
</dbReference>
<dbReference type="SUPFAM" id="SSF55973">
    <property type="entry name" value="S-adenosylmethionine synthetase"/>
    <property type="match status" value="3"/>
</dbReference>
<dbReference type="PROSITE" id="PS00376">
    <property type="entry name" value="ADOMET_SYNTHASE_1"/>
    <property type="match status" value="1"/>
</dbReference>
<dbReference type="PROSITE" id="PS00377">
    <property type="entry name" value="ADOMET_SYNTHASE_2"/>
    <property type="match status" value="1"/>
</dbReference>
<gene>
    <name evidence="1" type="primary">metK</name>
    <name type="ordered locus">LSEI_0877</name>
</gene>
<organism>
    <name type="scientific">Lacticaseibacillus paracasei (strain ATCC 334 / BCRC 17002 / CCUG 31169 / CIP 107868 / KCTC 3260 / NRRL B-441)</name>
    <name type="common">Lactobacillus paracasei</name>
    <dbReference type="NCBI Taxonomy" id="321967"/>
    <lineage>
        <taxon>Bacteria</taxon>
        <taxon>Bacillati</taxon>
        <taxon>Bacillota</taxon>
        <taxon>Bacilli</taxon>
        <taxon>Lactobacillales</taxon>
        <taxon>Lactobacillaceae</taxon>
        <taxon>Lacticaseibacillus</taxon>
    </lineage>
</organism>
<evidence type="ECO:0000255" key="1">
    <source>
        <dbReference type="HAMAP-Rule" id="MF_00086"/>
    </source>
</evidence>
<sequence>MQERHLFTSESVSEGHPDKIADQISDAILDAMLEQDPDSRVACETTVTTGLVLVVGEISTKAYVDIQSVVRGTIKKIGYTKESGFDPDSVGVLVALDEQSPDIAQGVDESLEARESDTDPLDKIGAGDQGMMFGFAIDETENYMPLPISLAHALMRKTDSLRHKGEISYLRPDAKAQVTVEYDDDDNPIRVDSVVVSVQHDPDVTLEEIRRDVEAKIIRTVIPEALMDDDTKIYVNPTGRFVLGGPQADSGLTGRKIIVDTYGGFARHGGGAFSGKDATKVDRSASYAARYIAKNVVAAGLAKRVEVQLAYAIGVAKPVSVSVNTFGTSAVSEDVIEQAIRENFDLRPAGIIKMLDLKRPIYEQTAAYGHFGRTDVDLPWEHLDKVQALLKYRD</sequence>
<proteinExistence type="inferred from homology"/>
<name>METK_LACP3</name>
<accession>Q03AU4</accession>
<comment type="function">
    <text evidence="1">Catalyzes the formation of S-adenosylmethionine (AdoMet) from methionine and ATP. The overall synthetic reaction is composed of two sequential steps, AdoMet formation and the subsequent tripolyphosphate hydrolysis which occurs prior to release of AdoMet from the enzyme.</text>
</comment>
<comment type="catalytic activity">
    <reaction evidence="1">
        <text>L-methionine + ATP + H2O = S-adenosyl-L-methionine + phosphate + diphosphate</text>
        <dbReference type="Rhea" id="RHEA:21080"/>
        <dbReference type="ChEBI" id="CHEBI:15377"/>
        <dbReference type="ChEBI" id="CHEBI:30616"/>
        <dbReference type="ChEBI" id="CHEBI:33019"/>
        <dbReference type="ChEBI" id="CHEBI:43474"/>
        <dbReference type="ChEBI" id="CHEBI:57844"/>
        <dbReference type="ChEBI" id="CHEBI:59789"/>
        <dbReference type="EC" id="2.5.1.6"/>
    </reaction>
</comment>
<comment type="cofactor">
    <cofactor evidence="1">
        <name>Mg(2+)</name>
        <dbReference type="ChEBI" id="CHEBI:18420"/>
    </cofactor>
    <text evidence="1">Binds 2 divalent ions per subunit.</text>
</comment>
<comment type="cofactor">
    <cofactor evidence="1">
        <name>K(+)</name>
        <dbReference type="ChEBI" id="CHEBI:29103"/>
    </cofactor>
    <text evidence="1">Binds 1 potassium ion per subunit.</text>
</comment>
<comment type="pathway">
    <text evidence="1">Amino-acid biosynthesis; S-adenosyl-L-methionine biosynthesis; S-adenosyl-L-methionine from L-methionine: step 1/1.</text>
</comment>
<comment type="subunit">
    <text evidence="1">Homotetramer; dimer of dimers.</text>
</comment>
<comment type="subcellular location">
    <subcellularLocation>
        <location evidence="1">Cytoplasm</location>
    </subcellularLocation>
</comment>
<comment type="similarity">
    <text evidence="1">Belongs to the AdoMet synthase family.</text>
</comment>
<reference key="1">
    <citation type="journal article" date="2006" name="Proc. Natl. Acad. Sci. U.S.A.">
        <title>Comparative genomics of the lactic acid bacteria.</title>
        <authorList>
            <person name="Makarova K.S."/>
            <person name="Slesarev A."/>
            <person name="Wolf Y.I."/>
            <person name="Sorokin A."/>
            <person name="Mirkin B."/>
            <person name="Koonin E.V."/>
            <person name="Pavlov A."/>
            <person name="Pavlova N."/>
            <person name="Karamychev V."/>
            <person name="Polouchine N."/>
            <person name="Shakhova V."/>
            <person name="Grigoriev I."/>
            <person name="Lou Y."/>
            <person name="Rohksar D."/>
            <person name="Lucas S."/>
            <person name="Huang K."/>
            <person name="Goodstein D.M."/>
            <person name="Hawkins T."/>
            <person name="Plengvidhya V."/>
            <person name="Welker D."/>
            <person name="Hughes J."/>
            <person name="Goh Y."/>
            <person name="Benson A."/>
            <person name="Baldwin K."/>
            <person name="Lee J.-H."/>
            <person name="Diaz-Muniz I."/>
            <person name="Dosti B."/>
            <person name="Smeianov V."/>
            <person name="Wechter W."/>
            <person name="Barabote R."/>
            <person name="Lorca G."/>
            <person name="Altermann E."/>
            <person name="Barrangou R."/>
            <person name="Ganesan B."/>
            <person name="Xie Y."/>
            <person name="Rawsthorne H."/>
            <person name="Tamir D."/>
            <person name="Parker C."/>
            <person name="Breidt F."/>
            <person name="Broadbent J.R."/>
            <person name="Hutkins R."/>
            <person name="O'Sullivan D."/>
            <person name="Steele J."/>
            <person name="Unlu G."/>
            <person name="Saier M.H. Jr."/>
            <person name="Klaenhammer T."/>
            <person name="Richardson P."/>
            <person name="Kozyavkin S."/>
            <person name="Weimer B.C."/>
            <person name="Mills D.A."/>
        </authorList>
    </citation>
    <scope>NUCLEOTIDE SEQUENCE [LARGE SCALE GENOMIC DNA]</scope>
    <source>
        <strain>ATCC 334 / BCRC 17002 / CCUG 31169 / CIP 107868 / KCTC 3260 / NRRL B-441</strain>
    </source>
</reference>
<feature type="chain" id="PRO_0000302927" description="S-adenosylmethionine synthase">
    <location>
        <begin position="1"/>
        <end position="394"/>
    </location>
</feature>
<feature type="region of interest" description="Flexible loop" evidence="1">
    <location>
        <begin position="99"/>
        <end position="109"/>
    </location>
</feature>
<feature type="binding site" description="in other chain" evidence="1">
    <location>
        <position position="16"/>
    </location>
    <ligand>
        <name>ATP</name>
        <dbReference type="ChEBI" id="CHEBI:30616"/>
        <note>ligand shared between two neighboring subunits</note>
    </ligand>
</feature>
<feature type="binding site" evidence="1">
    <location>
        <position position="18"/>
    </location>
    <ligand>
        <name>Mg(2+)</name>
        <dbReference type="ChEBI" id="CHEBI:18420"/>
    </ligand>
</feature>
<feature type="binding site" evidence="1">
    <location>
        <position position="44"/>
    </location>
    <ligand>
        <name>K(+)</name>
        <dbReference type="ChEBI" id="CHEBI:29103"/>
    </ligand>
</feature>
<feature type="binding site" description="in other chain" evidence="1">
    <location>
        <position position="57"/>
    </location>
    <ligand>
        <name>L-methionine</name>
        <dbReference type="ChEBI" id="CHEBI:57844"/>
        <note>ligand shared between two neighboring subunits</note>
    </ligand>
</feature>
<feature type="binding site" description="in other chain" evidence="1">
    <location>
        <position position="99"/>
    </location>
    <ligand>
        <name>L-methionine</name>
        <dbReference type="ChEBI" id="CHEBI:57844"/>
        <note>ligand shared between two neighboring subunits</note>
    </ligand>
</feature>
<feature type="binding site" description="in other chain" evidence="1">
    <location>
        <begin position="173"/>
        <end position="175"/>
    </location>
    <ligand>
        <name>ATP</name>
        <dbReference type="ChEBI" id="CHEBI:30616"/>
        <note>ligand shared between two neighboring subunits</note>
    </ligand>
</feature>
<feature type="binding site" description="in other chain" evidence="1">
    <location>
        <begin position="240"/>
        <end position="241"/>
    </location>
    <ligand>
        <name>ATP</name>
        <dbReference type="ChEBI" id="CHEBI:30616"/>
        <note>ligand shared between two neighboring subunits</note>
    </ligand>
</feature>
<feature type="binding site" evidence="1">
    <location>
        <position position="249"/>
    </location>
    <ligand>
        <name>ATP</name>
        <dbReference type="ChEBI" id="CHEBI:30616"/>
        <note>ligand shared between two neighboring subunits</note>
    </ligand>
</feature>
<feature type="binding site" evidence="1">
    <location>
        <position position="249"/>
    </location>
    <ligand>
        <name>L-methionine</name>
        <dbReference type="ChEBI" id="CHEBI:57844"/>
        <note>ligand shared between two neighboring subunits</note>
    </ligand>
</feature>
<feature type="binding site" description="in other chain" evidence="1">
    <location>
        <begin position="255"/>
        <end position="256"/>
    </location>
    <ligand>
        <name>ATP</name>
        <dbReference type="ChEBI" id="CHEBI:30616"/>
        <note>ligand shared between two neighboring subunits</note>
    </ligand>
</feature>
<feature type="binding site" evidence="1">
    <location>
        <position position="272"/>
    </location>
    <ligand>
        <name>ATP</name>
        <dbReference type="ChEBI" id="CHEBI:30616"/>
        <note>ligand shared between two neighboring subunits</note>
    </ligand>
</feature>
<feature type="binding site" evidence="1">
    <location>
        <position position="276"/>
    </location>
    <ligand>
        <name>ATP</name>
        <dbReference type="ChEBI" id="CHEBI:30616"/>
        <note>ligand shared between two neighboring subunits</note>
    </ligand>
</feature>
<feature type="binding site" description="in other chain" evidence="1">
    <location>
        <position position="280"/>
    </location>
    <ligand>
        <name>L-methionine</name>
        <dbReference type="ChEBI" id="CHEBI:57844"/>
        <note>ligand shared between two neighboring subunits</note>
    </ligand>
</feature>